<name>METXA_LEPIC</name>
<evidence type="ECO:0000255" key="1">
    <source>
        <dbReference type="HAMAP-Rule" id="MF_00296"/>
    </source>
</evidence>
<gene>
    <name evidence="1" type="primary">metXA</name>
    <name type="ordered locus">LIC_11853</name>
</gene>
<comment type="function">
    <text evidence="1">Transfers an acetyl group from acetyl-CoA to L-homoserine, forming acetyl-L-homoserine.</text>
</comment>
<comment type="catalytic activity">
    <reaction evidence="1">
        <text>L-homoserine + acetyl-CoA = O-acetyl-L-homoserine + CoA</text>
        <dbReference type="Rhea" id="RHEA:13701"/>
        <dbReference type="ChEBI" id="CHEBI:57287"/>
        <dbReference type="ChEBI" id="CHEBI:57288"/>
        <dbReference type="ChEBI" id="CHEBI:57476"/>
        <dbReference type="ChEBI" id="CHEBI:57716"/>
        <dbReference type="EC" id="2.3.1.31"/>
    </reaction>
</comment>
<comment type="pathway">
    <text evidence="1">Amino-acid biosynthesis; L-methionine biosynthesis via de novo pathway; O-acetyl-L-homoserine from L-homoserine: step 1/1.</text>
</comment>
<comment type="subunit">
    <text evidence="1">Homodimer.</text>
</comment>
<comment type="subcellular location">
    <subcellularLocation>
        <location evidence="1">Cytoplasm</location>
    </subcellularLocation>
</comment>
<comment type="similarity">
    <text evidence="1">Belongs to the AB hydrolase superfamily. MetX family.</text>
</comment>
<accession>Q72R95</accession>
<organism>
    <name type="scientific">Leptospira interrogans serogroup Icterohaemorrhagiae serovar copenhageni (strain Fiocruz L1-130)</name>
    <dbReference type="NCBI Taxonomy" id="267671"/>
    <lineage>
        <taxon>Bacteria</taxon>
        <taxon>Pseudomonadati</taxon>
        <taxon>Spirochaetota</taxon>
        <taxon>Spirochaetia</taxon>
        <taxon>Leptospirales</taxon>
        <taxon>Leptospiraceae</taxon>
        <taxon>Leptospira</taxon>
    </lineage>
</organism>
<proteinExistence type="inferred from homology"/>
<dbReference type="EC" id="2.3.1.31" evidence="1"/>
<dbReference type="EMBL" id="AE016823">
    <property type="protein sequence ID" value="AAS70439.1"/>
    <property type="molecule type" value="Genomic_DNA"/>
</dbReference>
<dbReference type="SMR" id="Q72R95"/>
<dbReference type="ESTHER" id="lepin-METX">
    <property type="family name" value="Homoserine_transacetylase"/>
</dbReference>
<dbReference type="KEGG" id="lic:LIC_11853"/>
<dbReference type="HOGENOM" id="CLU_028760_1_2_12"/>
<dbReference type="UniPathway" id="UPA00051">
    <property type="reaction ID" value="UER00074"/>
</dbReference>
<dbReference type="Proteomes" id="UP000007037">
    <property type="component" value="Chromosome I"/>
</dbReference>
<dbReference type="GO" id="GO:0005737">
    <property type="term" value="C:cytoplasm"/>
    <property type="evidence" value="ECO:0007669"/>
    <property type="project" value="UniProtKB-SubCell"/>
</dbReference>
<dbReference type="GO" id="GO:0004414">
    <property type="term" value="F:homoserine O-acetyltransferase activity"/>
    <property type="evidence" value="ECO:0007669"/>
    <property type="project" value="UniProtKB-UniRule"/>
</dbReference>
<dbReference type="GO" id="GO:0009092">
    <property type="term" value="P:homoserine metabolic process"/>
    <property type="evidence" value="ECO:0007669"/>
    <property type="project" value="TreeGrafter"/>
</dbReference>
<dbReference type="GO" id="GO:0009086">
    <property type="term" value="P:methionine biosynthetic process"/>
    <property type="evidence" value="ECO:0007669"/>
    <property type="project" value="UniProtKB-UniRule"/>
</dbReference>
<dbReference type="FunFam" id="1.10.1740.110:FF:000001">
    <property type="entry name" value="Homoserine O-acetyltransferase"/>
    <property type="match status" value="1"/>
</dbReference>
<dbReference type="Gene3D" id="1.10.1740.110">
    <property type="match status" value="1"/>
</dbReference>
<dbReference type="Gene3D" id="3.40.50.1820">
    <property type="entry name" value="alpha/beta hydrolase"/>
    <property type="match status" value="1"/>
</dbReference>
<dbReference type="HAMAP" id="MF_00296">
    <property type="entry name" value="MetX_acyltransf"/>
    <property type="match status" value="1"/>
</dbReference>
<dbReference type="InterPro" id="IPR000073">
    <property type="entry name" value="AB_hydrolase_1"/>
</dbReference>
<dbReference type="InterPro" id="IPR029058">
    <property type="entry name" value="AB_hydrolase_fold"/>
</dbReference>
<dbReference type="InterPro" id="IPR008220">
    <property type="entry name" value="HAT_MetX-like"/>
</dbReference>
<dbReference type="NCBIfam" id="TIGR01392">
    <property type="entry name" value="homoserO_Ac_trn"/>
    <property type="match status" value="1"/>
</dbReference>
<dbReference type="NCBIfam" id="NF001209">
    <property type="entry name" value="PRK00175.1"/>
    <property type="match status" value="1"/>
</dbReference>
<dbReference type="PANTHER" id="PTHR32268">
    <property type="entry name" value="HOMOSERINE O-ACETYLTRANSFERASE"/>
    <property type="match status" value="1"/>
</dbReference>
<dbReference type="PANTHER" id="PTHR32268:SF11">
    <property type="entry name" value="HOMOSERINE O-ACETYLTRANSFERASE"/>
    <property type="match status" value="1"/>
</dbReference>
<dbReference type="Pfam" id="PF00561">
    <property type="entry name" value="Abhydrolase_1"/>
    <property type="match status" value="1"/>
</dbReference>
<dbReference type="PIRSF" id="PIRSF000443">
    <property type="entry name" value="Homoser_Ac_trans"/>
    <property type="match status" value="1"/>
</dbReference>
<dbReference type="SUPFAM" id="SSF53474">
    <property type="entry name" value="alpha/beta-Hydrolases"/>
    <property type="match status" value="1"/>
</dbReference>
<keyword id="KW-0012">Acyltransferase</keyword>
<keyword id="KW-0028">Amino-acid biosynthesis</keyword>
<keyword id="KW-0963">Cytoplasm</keyword>
<keyword id="KW-0486">Methionine biosynthesis</keyword>
<keyword id="KW-0808">Transferase</keyword>
<feature type="chain" id="PRO_0000155721" description="Homoserine O-acetyltransferase">
    <location>
        <begin position="1"/>
        <end position="366"/>
    </location>
</feature>
<feature type="domain" description="AB hydrolase-1" evidence="1">
    <location>
        <begin position="47"/>
        <end position="349"/>
    </location>
</feature>
<feature type="active site" description="Nucleophile" evidence="1">
    <location>
        <position position="153"/>
    </location>
</feature>
<feature type="active site" evidence="1">
    <location>
        <position position="311"/>
    </location>
</feature>
<feature type="active site" evidence="1">
    <location>
        <position position="344"/>
    </location>
</feature>
<feature type="binding site" evidence="1">
    <location>
        <position position="221"/>
    </location>
    <ligand>
        <name>substrate</name>
    </ligand>
</feature>
<feature type="binding site" evidence="1">
    <location>
        <position position="345"/>
    </location>
    <ligand>
        <name>substrate</name>
    </ligand>
</feature>
<reference key="1">
    <citation type="journal article" date="2004" name="J. Bacteriol.">
        <title>Comparative genomics of two Leptospira interrogans serovars reveals novel insights into physiology and pathogenesis.</title>
        <authorList>
            <person name="Nascimento A.L.T.O."/>
            <person name="Ko A.I."/>
            <person name="Martins E.A.L."/>
            <person name="Monteiro-Vitorello C.B."/>
            <person name="Ho P.L."/>
            <person name="Haake D.A."/>
            <person name="Verjovski-Almeida S."/>
            <person name="Hartskeerl R.A."/>
            <person name="Marques M.V."/>
            <person name="Oliveira M.C."/>
            <person name="Menck C.F.M."/>
            <person name="Leite L.C.C."/>
            <person name="Carrer H."/>
            <person name="Coutinho L.L."/>
            <person name="Degrave W.M."/>
            <person name="Dellagostin O.A."/>
            <person name="El-Dorry H."/>
            <person name="Ferro E.S."/>
            <person name="Ferro M.I.T."/>
            <person name="Furlan L.R."/>
            <person name="Gamberini M."/>
            <person name="Giglioti E.A."/>
            <person name="Goes-Neto A."/>
            <person name="Goldman G.H."/>
            <person name="Goldman M.H.S."/>
            <person name="Harakava R."/>
            <person name="Jeronimo S.M.B."/>
            <person name="Junqueira-de-Azevedo I.L.M."/>
            <person name="Kimura E.T."/>
            <person name="Kuramae E.E."/>
            <person name="Lemos E.G.M."/>
            <person name="Lemos M.V.F."/>
            <person name="Marino C.L."/>
            <person name="Nunes L.R."/>
            <person name="de Oliveira R.C."/>
            <person name="Pereira G.G."/>
            <person name="Reis M.S."/>
            <person name="Schriefer A."/>
            <person name="Siqueira W.J."/>
            <person name="Sommer P."/>
            <person name="Tsai S.M."/>
            <person name="Simpson A.J.G."/>
            <person name="Ferro J.A."/>
            <person name="Camargo L.E.A."/>
            <person name="Kitajima J.P."/>
            <person name="Setubal J.C."/>
            <person name="Van Sluys M.A."/>
        </authorList>
    </citation>
    <scope>NUCLEOTIDE SEQUENCE [LARGE SCALE GENOMIC DNA]</scope>
    <source>
        <strain>Fiocruz L1-130</strain>
    </source>
</reference>
<sequence>MNETGSIGIIETKYAEFKELILNNGSVLSPVVIAYETYGTLSSSKNNAILICHALSGDAHAAGYHSGSDKKPGWWDDYIGPGKSFDTNQYFIICSNVIGGCKGSSGPLSIHPETSTPYGSRFPFVSIQDMVKAQKLLVESLGIEKLFCVAGGSMGGMQALEWSIAYPNSLSNCIVMASTAEHSAMQIAFNEVGRQAILSDPNWKNGLYDENSPRKGLALARMVGHITYLSDDKMREKFGRNPPRGNILSTDFAVGSYLIYQGESFVDRFDANSYIYVTKALDHYSLGKGKELTAALSNATCRFLVVSYSSDWLYPPAQSREIVKSLEAADKRVFYVELQSGEGHDSFLLKNPKQIEILKGFLENPN</sequence>
<protein>
    <recommendedName>
        <fullName evidence="1">Homoserine O-acetyltransferase</fullName>
        <shortName evidence="1">HAT</shortName>
        <ecNumber evidence="1">2.3.1.31</ecNumber>
    </recommendedName>
    <alternativeName>
        <fullName evidence="1">Homoserine transacetylase</fullName>
        <shortName evidence="1">HTA</shortName>
    </alternativeName>
</protein>